<dbReference type="EMBL" id="AB001488">
    <property type="protein sequence ID" value="BAA19370.1"/>
    <property type="molecule type" value="Genomic_DNA"/>
</dbReference>
<dbReference type="EMBL" id="AL009126">
    <property type="protein sequence ID" value="CAB12343.1"/>
    <property type="molecule type" value="Genomic_DNA"/>
</dbReference>
<dbReference type="PIR" id="A69780">
    <property type="entry name" value="A69780"/>
</dbReference>
<dbReference type="RefSeq" id="NP_388417.1">
    <property type="nucleotide sequence ID" value="NC_000964.3"/>
</dbReference>
<dbReference type="RefSeq" id="WP_003244236.1">
    <property type="nucleotide sequence ID" value="NZ_OZ025638.1"/>
</dbReference>
<dbReference type="SMR" id="P96680"/>
<dbReference type="FunCoup" id="P96680">
    <property type="interactions" value="155"/>
</dbReference>
<dbReference type="STRING" id="224308.BSU05360"/>
<dbReference type="TCDB" id="2.A.7.3.32">
    <property type="family name" value="the drug/metabolite transporter (dmt) superfamily"/>
</dbReference>
<dbReference type="PaxDb" id="224308-BSU05360"/>
<dbReference type="EnsemblBacteria" id="CAB12343">
    <property type="protein sequence ID" value="CAB12343"/>
    <property type="gene ID" value="BSU_05360"/>
</dbReference>
<dbReference type="GeneID" id="938086"/>
<dbReference type="KEGG" id="bsu:BSU05360"/>
<dbReference type="PATRIC" id="fig|224308.179.peg.573"/>
<dbReference type="eggNOG" id="COG0697">
    <property type="taxonomic scope" value="Bacteria"/>
</dbReference>
<dbReference type="InParanoid" id="P96680"/>
<dbReference type="OrthoDB" id="9809509at2"/>
<dbReference type="PhylomeDB" id="P96680"/>
<dbReference type="BioCyc" id="BSUB:BSU05360-MONOMER"/>
<dbReference type="Proteomes" id="UP000001570">
    <property type="component" value="Chromosome"/>
</dbReference>
<dbReference type="GO" id="GO:0005886">
    <property type="term" value="C:plasma membrane"/>
    <property type="evidence" value="ECO:0007669"/>
    <property type="project" value="UniProtKB-SubCell"/>
</dbReference>
<dbReference type="Gene3D" id="1.10.3730.20">
    <property type="match status" value="1"/>
</dbReference>
<dbReference type="InterPro" id="IPR052756">
    <property type="entry name" value="Alkyne_AA_exporter"/>
</dbReference>
<dbReference type="InterPro" id="IPR000620">
    <property type="entry name" value="EamA_dom"/>
</dbReference>
<dbReference type="PANTHER" id="PTHR12715:SF4">
    <property type="entry name" value="EAMA DOMAIN-CONTAINING PROTEIN"/>
    <property type="match status" value="1"/>
</dbReference>
<dbReference type="PANTHER" id="PTHR12715">
    <property type="entry name" value="TRANSPORTER, DRUG/METABOLITE EXPORTER FAMILY"/>
    <property type="match status" value="1"/>
</dbReference>
<dbReference type="Pfam" id="PF00892">
    <property type="entry name" value="EamA"/>
    <property type="match status" value="2"/>
</dbReference>
<dbReference type="SUPFAM" id="SSF103481">
    <property type="entry name" value="Multidrug resistance efflux transporter EmrE"/>
    <property type="match status" value="2"/>
</dbReference>
<name>YDFC_BACSU</name>
<reference key="1">
    <citation type="submission" date="1997-03" db="EMBL/GenBank/DDBJ databases">
        <title>A 148 kbp sequence of the region between 35 and 47 degree of the Bacillus subtilis genome.</title>
        <authorList>
            <person name="Kasahara Y."/>
            <person name="Nakai S."/>
            <person name="Lee S."/>
            <person name="Sadaie Y."/>
            <person name="Ogasawara N."/>
        </authorList>
    </citation>
    <scope>NUCLEOTIDE SEQUENCE [GENOMIC DNA]</scope>
    <source>
        <strain>168</strain>
    </source>
</reference>
<reference key="2">
    <citation type="journal article" date="1997" name="Nature">
        <title>The complete genome sequence of the Gram-positive bacterium Bacillus subtilis.</title>
        <authorList>
            <person name="Kunst F."/>
            <person name="Ogasawara N."/>
            <person name="Moszer I."/>
            <person name="Albertini A.M."/>
            <person name="Alloni G."/>
            <person name="Azevedo V."/>
            <person name="Bertero M.G."/>
            <person name="Bessieres P."/>
            <person name="Bolotin A."/>
            <person name="Borchert S."/>
            <person name="Borriss R."/>
            <person name="Boursier L."/>
            <person name="Brans A."/>
            <person name="Braun M."/>
            <person name="Brignell S.C."/>
            <person name="Bron S."/>
            <person name="Brouillet S."/>
            <person name="Bruschi C.V."/>
            <person name="Caldwell B."/>
            <person name="Capuano V."/>
            <person name="Carter N.M."/>
            <person name="Choi S.-K."/>
            <person name="Codani J.-J."/>
            <person name="Connerton I.F."/>
            <person name="Cummings N.J."/>
            <person name="Daniel R.A."/>
            <person name="Denizot F."/>
            <person name="Devine K.M."/>
            <person name="Duesterhoeft A."/>
            <person name="Ehrlich S.D."/>
            <person name="Emmerson P.T."/>
            <person name="Entian K.-D."/>
            <person name="Errington J."/>
            <person name="Fabret C."/>
            <person name="Ferrari E."/>
            <person name="Foulger D."/>
            <person name="Fritz C."/>
            <person name="Fujita M."/>
            <person name="Fujita Y."/>
            <person name="Fuma S."/>
            <person name="Galizzi A."/>
            <person name="Galleron N."/>
            <person name="Ghim S.-Y."/>
            <person name="Glaser P."/>
            <person name="Goffeau A."/>
            <person name="Golightly E.J."/>
            <person name="Grandi G."/>
            <person name="Guiseppi G."/>
            <person name="Guy B.J."/>
            <person name="Haga K."/>
            <person name="Haiech J."/>
            <person name="Harwood C.R."/>
            <person name="Henaut A."/>
            <person name="Hilbert H."/>
            <person name="Holsappel S."/>
            <person name="Hosono S."/>
            <person name="Hullo M.-F."/>
            <person name="Itaya M."/>
            <person name="Jones L.-M."/>
            <person name="Joris B."/>
            <person name="Karamata D."/>
            <person name="Kasahara Y."/>
            <person name="Klaerr-Blanchard M."/>
            <person name="Klein C."/>
            <person name="Kobayashi Y."/>
            <person name="Koetter P."/>
            <person name="Koningstein G."/>
            <person name="Krogh S."/>
            <person name="Kumano M."/>
            <person name="Kurita K."/>
            <person name="Lapidus A."/>
            <person name="Lardinois S."/>
            <person name="Lauber J."/>
            <person name="Lazarevic V."/>
            <person name="Lee S.-M."/>
            <person name="Levine A."/>
            <person name="Liu H."/>
            <person name="Masuda S."/>
            <person name="Mauel C."/>
            <person name="Medigue C."/>
            <person name="Medina N."/>
            <person name="Mellado R.P."/>
            <person name="Mizuno M."/>
            <person name="Moestl D."/>
            <person name="Nakai S."/>
            <person name="Noback M."/>
            <person name="Noone D."/>
            <person name="O'Reilly M."/>
            <person name="Ogawa K."/>
            <person name="Ogiwara A."/>
            <person name="Oudega B."/>
            <person name="Park S.-H."/>
            <person name="Parro V."/>
            <person name="Pohl T.M."/>
            <person name="Portetelle D."/>
            <person name="Porwollik S."/>
            <person name="Prescott A.M."/>
            <person name="Presecan E."/>
            <person name="Pujic P."/>
            <person name="Purnelle B."/>
            <person name="Rapoport G."/>
            <person name="Rey M."/>
            <person name="Reynolds S."/>
            <person name="Rieger M."/>
            <person name="Rivolta C."/>
            <person name="Rocha E."/>
            <person name="Roche B."/>
            <person name="Rose M."/>
            <person name="Sadaie Y."/>
            <person name="Sato T."/>
            <person name="Scanlan E."/>
            <person name="Schleich S."/>
            <person name="Schroeter R."/>
            <person name="Scoffone F."/>
            <person name="Sekiguchi J."/>
            <person name="Sekowska A."/>
            <person name="Seror S.J."/>
            <person name="Serror P."/>
            <person name="Shin B.-S."/>
            <person name="Soldo B."/>
            <person name="Sorokin A."/>
            <person name="Tacconi E."/>
            <person name="Takagi T."/>
            <person name="Takahashi H."/>
            <person name="Takemaru K."/>
            <person name="Takeuchi M."/>
            <person name="Tamakoshi A."/>
            <person name="Tanaka T."/>
            <person name="Terpstra P."/>
            <person name="Tognoni A."/>
            <person name="Tosato V."/>
            <person name="Uchiyama S."/>
            <person name="Vandenbol M."/>
            <person name="Vannier F."/>
            <person name="Vassarotti A."/>
            <person name="Viari A."/>
            <person name="Wambutt R."/>
            <person name="Wedler E."/>
            <person name="Wedler H."/>
            <person name="Weitzenegger T."/>
            <person name="Winters P."/>
            <person name="Wipat A."/>
            <person name="Yamamoto H."/>
            <person name="Yamane K."/>
            <person name="Yasumoto K."/>
            <person name="Yata K."/>
            <person name="Yoshida K."/>
            <person name="Yoshikawa H.-F."/>
            <person name="Zumstein E."/>
            <person name="Yoshikawa H."/>
            <person name="Danchin A."/>
        </authorList>
    </citation>
    <scope>NUCLEOTIDE SEQUENCE [LARGE SCALE GENOMIC DNA]</scope>
    <source>
        <strain>168</strain>
    </source>
</reference>
<accession>P96680</accession>
<protein>
    <recommendedName>
        <fullName>Uncharacterized transporter YdfC</fullName>
    </recommendedName>
</protein>
<comment type="subcellular location">
    <subcellularLocation>
        <location evidence="2">Cell membrane</location>
        <topology evidence="2">Multi-pass membrane protein</topology>
    </subcellularLocation>
</comment>
<comment type="similarity">
    <text evidence="2">Belongs to the EamA transporter family.</text>
</comment>
<feature type="chain" id="PRO_0000108181" description="Uncharacterized transporter YdfC">
    <location>
        <begin position="1"/>
        <end position="306"/>
    </location>
</feature>
<feature type="transmembrane region" description="Helical" evidence="1">
    <location>
        <begin position="6"/>
        <end position="26"/>
    </location>
</feature>
<feature type="transmembrane region" description="Helical" evidence="1">
    <location>
        <begin position="37"/>
        <end position="57"/>
    </location>
</feature>
<feature type="transmembrane region" description="Helical" evidence="1">
    <location>
        <begin position="67"/>
        <end position="87"/>
    </location>
</feature>
<feature type="transmembrane region" description="Helical" evidence="1">
    <location>
        <begin position="91"/>
        <end position="111"/>
    </location>
</feature>
<feature type="transmembrane region" description="Helical" evidence="1">
    <location>
        <begin position="125"/>
        <end position="145"/>
    </location>
</feature>
<feature type="transmembrane region" description="Helical" evidence="1">
    <location>
        <begin position="148"/>
        <end position="168"/>
    </location>
</feature>
<feature type="transmembrane region" description="Helical" evidence="1">
    <location>
        <begin position="177"/>
        <end position="197"/>
    </location>
</feature>
<feature type="transmembrane region" description="Helical" evidence="1">
    <location>
        <begin position="213"/>
        <end position="233"/>
    </location>
</feature>
<feature type="transmembrane region" description="Helical" evidence="1">
    <location>
        <begin position="251"/>
        <end position="271"/>
    </location>
</feature>
<feature type="domain" description="EamA 1">
    <location>
        <begin position="17"/>
        <end position="140"/>
    </location>
</feature>
<feature type="domain" description="EamA 2">
    <location>
        <begin position="160"/>
        <end position="285"/>
    </location>
</feature>
<gene>
    <name type="primary">ydfC</name>
    <name type="ordered locus">BSU05360</name>
</gene>
<sequence length="306" mass="33559">MRKKTVQIMISHSLMIGLWASAFPGIRAGLEGYTPEHLALFRLLIGSMALLLFAVLTQMRLPDLKDIPAIFLLGFLGFAFYHILLNIGEKTVSAGVASLLVTTAPIFSAMLSRLFYKEHFGFTKWLGSMISLLGVLLIAFGAGDFTYSMSGILVILLAAFSESIYFVFQARYIKKYGFIPFVTFTIWGGTIPMLVFLPGLGEEMMNASISATLSIVYLGLLPTVIPYFALAYVTSFVGASEATLSLYVTPALALIISWLWIGEIPTLLSLLGGVVTVGGVCFTYLKVNKMNKIFITHFSAKRVKKL</sequence>
<keyword id="KW-1003">Cell membrane</keyword>
<keyword id="KW-0472">Membrane</keyword>
<keyword id="KW-1185">Reference proteome</keyword>
<keyword id="KW-0677">Repeat</keyword>
<keyword id="KW-0812">Transmembrane</keyword>
<keyword id="KW-1133">Transmembrane helix</keyword>
<keyword id="KW-0813">Transport</keyword>
<organism>
    <name type="scientific">Bacillus subtilis (strain 168)</name>
    <dbReference type="NCBI Taxonomy" id="224308"/>
    <lineage>
        <taxon>Bacteria</taxon>
        <taxon>Bacillati</taxon>
        <taxon>Bacillota</taxon>
        <taxon>Bacilli</taxon>
        <taxon>Bacillales</taxon>
        <taxon>Bacillaceae</taxon>
        <taxon>Bacillus</taxon>
    </lineage>
</organism>
<proteinExistence type="inferred from homology"/>
<evidence type="ECO:0000255" key="1"/>
<evidence type="ECO:0000305" key="2"/>